<sequence length="369" mass="40839">MANVTLSSVYKAFGEAVISRDINLEIDDGEFVVFVGPSGCGKSTLLRMIAGLEDITSGELLIGGKRMNEVPPSERGIGMVFQSYALYPHLSVAENMSFGLKLAGVKKAEIYQRVNQVAEVLQLAHLLDRRPKALSGGQRQRVAIGRTLVSEPDVFLLDEPLSNLDAALRVQMRIEISRLHKRLERTMIYVTHDQVEAMTLADKIVVLDAGNIAQVGKPLELYHYPANRFVAGFIGSPKMNFLPVKVTAAEPRQVQIELPNHQRVWLPVEGDQVQVGANMSLGIRPEHLLPSSASEVTLEGEIQVVEQLGNETQIHIQIPAIRQNLVYRQNDVVLVEEGATFSIGLPPHRCHLFREDGTACKRLYQELGV</sequence>
<organism>
    <name type="scientific">Yersinia pestis bv. Antiqua (strain Antiqua)</name>
    <dbReference type="NCBI Taxonomy" id="360102"/>
    <lineage>
        <taxon>Bacteria</taxon>
        <taxon>Pseudomonadati</taxon>
        <taxon>Pseudomonadota</taxon>
        <taxon>Gammaproteobacteria</taxon>
        <taxon>Enterobacterales</taxon>
        <taxon>Yersiniaceae</taxon>
        <taxon>Yersinia</taxon>
    </lineage>
</organism>
<proteinExistence type="inferred from homology"/>
<keyword id="KW-0067">ATP-binding</keyword>
<keyword id="KW-0997">Cell inner membrane</keyword>
<keyword id="KW-1003">Cell membrane</keyword>
<keyword id="KW-0472">Membrane</keyword>
<keyword id="KW-0547">Nucleotide-binding</keyword>
<keyword id="KW-0762">Sugar transport</keyword>
<keyword id="KW-1278">Translocase</keyword>
<keyword id="KW-0813">Transport</keyword>
<feature type="chain" id="PRO_0000274002" description="Maltose/maltodextrin import ATP-binding protein MalK">
    <location>
        <begin position="1"/>
        <end position="369"/>
    </location>
</feature>
<feature type="domain" description="ABC transporter" evidence="1">
    <location>
        <begin position="4"/>
        <end position="234"/>
    </location>
</feature>
<feature type="binding site" evidence="1">
    <location>
        <begin position="36"/>
        <end position="43"/>
    </location>
    <ligand>
        <name>ATP</name>
        <dbReference type="ChEBI" id="CHEBI:30616"/>
    </ligand>
</feature>
<dbReference type="EC" id="7.5.2.1" evidence="1"/>
<dbReference type="EMBL" id="CP000308">
    <property type="protein sequence ID" value="ABG12001.1"/>
    <property type="molecule type" value="Genomic_DNA"/>
</dbReference>
<dbReference type="RefSeq" id="WP_002212091.1">
    <property type="nucleotide sequence ID" value="NZ_CP009906.1"/>
</dbReference>
<dbReference type="SMR" id="Q1CC21"/>
<dbReference type="GeneID" id="96663134"/>
<dbReference type="KEGG" id="ypa:YPA_0032"/>
<dbReference type="Proteomes" id="UP000001971">
    <property type="component" value="Chromosome"/>
</dbReference>
<dbReference type="GO" id="GO:0055052">
    <property type="term" value="C:ATP-binding cassette (ABC) transporter complex, substrate-binding subunit-containing"/>
    <property type="evidence" value="ECO:0007669"/>
    <property type="project" value="TreeGrafter"/>
</dbReference>
<dbReference type="GO" id="GO:1990060">
    <property type="term" value="C:maltose transport complex"/>
    <property type="evidence" value="ECO:0007669"/>
    <property type="project" value="TreeGrafter"/>
</dbReference>
<dbReference type="GO" id="GO:0015423">
    <property type="term" value="F:ABC-type maltose transporter activity"/>
    <property type="evidence" value="ECO:0007669"/>
    <property type="project" value="UniProtKB-EC"/>
</dbReference>
<dbReference type="GO" id="GO:0005524">
    <property type="term" value="F:ATP binding"/>
    <property type="evidence" value="ECO:0007669"/>
    <property type="project" value="UniProtKB-KW"/>
</dbReference>
<dbReference type="GO" id="GO:0016887">
    <property type="term" value="F:ATP hydrolysis activity"/>
    <property type="evidence" value="ECO:0007669"/>
    <property type="project" value="InterPro"/>
</dbReference>
<dbReference type="CDD" id="cd03301">
    <property type="entry name" value="ABC_MalK_N"/>
    <property type="match status" value="1"/>
</dbReference>
<dbReference type="FunFam" id="3.40.50.300:FF:000042">
    <property type="entry name" value="Maltose/maltodextrin ABC transporter, ATP-binding protein"/>
    <property type="match status" value="1"/>
</dbReference>
<dbReference type="FunFam" id="2.40.50.100:FF:000014">
    <property type="entry name" value="Maltose/maltodextrin import ATP-binding protein MalK"/>
    <property type="match status" value="1"/>
</dbReference>
<dbReference type="Gene3D" id="2.40.50.100">
    <property type="match status" value="1"/>
</dbReference>
<dbReference type="Gene3D" id="2.40.50.140">
    <property type="entry name" value="Nucleic acid-binding proteins"/>
    <property type="match status" value="1"/>
</dbReference>
<dbReference type="Gene3D" id="3.40.50.300">
    <property type="entry name" value="P-loop containing nucleotide triphosphate hydrolases"/>
    <property type="match status" value="1"/>
</dbReference>
<dbReference type="InterPro" id="IPR003593">
    <property type="entry name" value="AAA+_ATPase"/>
</dbReference>
<dbReference type="InterPro" id="IPR003439">
    <property type="entry name" value="ABC_transporter-like_ATP-bd"/>
</dbReference>
<dbReference type="InterPro" id="IPR017871">
    <property type="entry name" value="ABC_transporter-like_CS"/>
</dbReference>
<dbReference type="InterPro" id="IPR015855">
    <property type="entry name" value="ABC_transpr_MalK-like"/>
</dbReference>
<dbReference type="InterPro" id="IPR047641">
    <property type="entry name" value="ABC_transpr_MalK/UgpC-like"/>
</dbReference>
<dbReference type="InterPro" id="IPR008995">
    <property type="entry name" value="Mo/tungstate-bd_C_term_dom"/>
</dbReference>
<dbReference type="InterPro" id="IPR012340">
    <property type="entry name" value="NA-bd_OB-fold"/>
</dbReference>
<dbReference type="InterPro" id="IPR040582">
    <property type="entry name" value="OB_MalK-like"/>
</dbReference>
<dbReference type="InterPro" id="IPR027417">
    <property type="entry name" value="P-loop_NTPase"/>
</dbReference>
<dbReference type="NCBIfam" id="NF008233">
    <property type="entry name" value="PRK11000.1"/>
    <property type="match status" value="1"/>
</dbReference>
<dbReference type="NCBIfam" id="NF008653">
    <property type="entry name" value="PRK11650.1"/>
    <property type="match status" value="1"/>
</dbReference>
<dbReference type="PANTHER" id="PTHR43875">
    <property type="entry name" value="MALTODEXTRIN IMPORT ATP-BINDING PROTEIN MSMX"/>
    <property type="match status" value="1"/>
</dbReference>
<dbReference type="PANTHER" id="PTHR43875:SF3">
    <property type="entry name" value="MALTOSE_MALTODEXTRIN IMPORT ATP-BINDING PROTEIN MALK"/>
    <property type="match status" value="1"/>
</dbReference>
<dbReference type="Pfam" id="PF00005">
    <property type="entry name" value="ABC_tran"/>
    <property type="match status" value="1"/>
</dbReference>
<dbReference type="Pfam" id="PF17912">
    <property type="entry name" value="OB_MalK"/>
    <property type="match status" value="1"/>
</dbReference>
<dbReference type="SMART" id="SM00382">
    <property type="entry name" value="AAA"/>
    <property type="match status" value="1"/>
</dbReference>
<dbReference type="SUPFAM" id="SSF50331">
    <property type="entry name" value="MOP-like"/>
    <property type="match status" value="1"/>
</dbReference>
<dbReference type="SUPFAM" id="SSF52540">
    <property type="entry name" value="P-loop containing nucleoside triphosphate hydrolases"/>
    <property type="match status" value="1"/>
</dbReference>
<dbReference type="PROSITE" id="PS00211">
    <property type="entry name" value="ABC_TRANSPORTER_1"/>
    <property type="match status" value="1"/>
</dbReference>
<dbReference type="PROSITE" id="PS50893">
    <property type="entry name" value="ABC_TRANSPORTER_2"/>
    <property type="match status" value="1"/>
</dbReference>
<dbReference type="PROSITE" id="PS51245">
    <property type="entry name" value="MALK"/>
    <property type="match status" value="1"/>
</dbReference>
<reference key="1">
    <citation type="journal article" date="2006" name="J. Bacteriol.">
        <title>Complete genome sequence of Yersinia pestis strains Antiqua and Nepal516: evidence of gene reduction in an emerging pathogen.</title>
        <authorList>
            <person name="Chain P.S.G."/>
            <person name="Hu P."/>
            <person name="Malfatti S.A."/>
            <person name="Radnedge L."/>
            <person name="Larimer F."/>
            <person name="Vergez L.M."/>
            <person name="Worsham P."/>
            <person name="Chu M.C."/>
            <person name="Andersen G.L."/>
        </authorList>
    </citation>
    <scope>NUCLEOTIDE SEQUENCE [LARGE SCALE GENOMIC DNA]</scope>
    <source>
        <strain>Antiqua</strain>
    </source>
</reference>
<evidence type="ECO:0000255" key="1">
    <source>
        <dbReference type="HAMAP-Rule" id="MF_01709"/>
    </source>
</evidence>
<comment type="function">
    <text evidence="1">Part of the ABC transporter complex MalEFGK involved in maltose/maltodextrin import. Responsible for energy coupling to the transport system.</text>
</comment>
<comment type="catalytic activity">
    <reaction evidence="1">
        <text>D-maltose(out) + ATP + H2O = D-maltose(in) + ADP + phosphate + H(+)</text>
        <dbReference type="Rhea" id="RHEA:22132"/>
        <dbReference type="ChEBI" id="CHEBI:15377"/>
        <dbReference type="ChEBI" id="CHEBI:15378"/>
        <dbReference type="ChEBI" id="CHEBI:17306"/>
        <dbReference type="ChEBI" id="CHEBI:30616"/>
        <dbReference type="ChEBI" id="CHEBI:43474"/>
        <dbReference type="ChEBI" id="CHEBI:456216"/>
        <dbReference type="EC" id="7.5.2.1"/>
    </reaction>
</comment>
<comment type="subunit">
    <text evidence="1">The complex is composed of two ATP-binding proteins (MalK), two transmembrane proteins (MalG and MalK) and a solute-binding protein (MalE).</text>
</comment>
<comment type="subcellular location">
    <subcellularLocation>
        <location evidence="1">Cell inner membrane</location>
        <topology evidence="1">Peripheral membrane protein</topology>
    </subcellularLocation>
</comment>
<comment type="similarity">
    <text evidence="1">Belongs to the ABC transporter superfamily. Maltooligosaccharide importer (TC 3.A.1.1.1) family.</text>
</comment>
<accession>Q1CC21</accession>
<protein>
    <recommendedName>
        <fullName evidence="1">Maltose/maltodextrin import ATP-binding protein MalK</fullName>
        <ecNumber evidence="1">7.5.2.1</ecNumber>
    </recommendedName>
</protein>
<gene>
    <name evidence="1" type="primary">malK</name>
    <name type="ordered locus">YPA_0032</name>
</gene>
<name>MALK_YERPA</name>